<accession>Q9X2A1</accession>
<protein>
    <recommendedName>
        <fullName evidence="1">Argininosuccinate synthase</fullName>
        <ecNumber evidence="1">6.3.4.5</ecNumber>
    </recommendedName>
    <alternativeName>
        <fullName evidence="1">Citrulline--aspartate ligase</fullName>
    </alternativeName>
</protein>
<dbReference type="EC" id="6.3.4.5" evidence="1"/>
<dbReference type="EMBL" id="AE000512">
    <property type="protein sequence ID" value="AAD36844.1"/>
    <property type="molecule type" value="Genomic_DNA"/>
</dbReference>
<dbReference type="PIR" id="H72210">
    <property type="entry name" value="H72210"/>
</dbReference>
<dbReference type="RefSeq" id="NP_229577.1">
    <property type="nucleotide sequence ID" value="NC_000853.1"/>
</dbReference>
<dbReference type="RefSeq" id="WP_004082326.1">
    <property type="nucleotide sequence ID" value="NC_000853.1"/>
</dbReference>
<dbReference type="PDB" id="1VL2">
    <property type="method" value="X-ray"/>
    <property type="resolution" value="1.65 A"/>
    <property type="chains" value="A/B/C/D=1-409"/>
</dbReference>
<dbReference type="PDBsum" id="1VL2"/>
<dbReference type="SMR" id="Q9X2A1"/>
<dbReference type="FunCoup" id="Q9X2A1">
    <property type="interactions" value="310"/>
</dbReference>
<dbReference type="STRING" id="243274.TM_1780"/>
<dbReference type="PaxDb" id="243274-THEMA_05300"/>
<dbReference type="EnsemblBacteria" id="AAD36844">
    <property type="protein sequence ID" value="AAD36844"/>
    <property type="gene ID" value="TM_1780"/>
</dbReference>
<dbReference type="KEGG" id="tma:TM1780"/>
<dbReference type="KEGG" id="tmi:THEMA_05300"/>
<dbReference type="KEGG" id="tmm:Tmari_1789"/>
<dbReference type="KEGG" id="tmw:THMA_1824"/>
<dbReference type="eggNOG" id="COG0137">
    <property type="taxonomic scope" value="Bacteria"/>
</dbReference>
<dbReference type="InParanoid" id="Q9X2A1"/>
<dbReference type="OrthoDB" id="9801641at2"/>
<dbReference type="UniPathway" id="UPA00068">
    <property type="reaction ID" value="UER00113"/>
</dbReference>
<dbReference type="EvolutionaryTrace" id="Q9X2A1"/>
<dbReference type="Proteomes" id="UP000008183">
    <property type="component" value="Chromosome"/>
</dbReference>
<dbReference type="GO" id="GO:0005737">
    <property type="term" value="C:cytoplasm"/>
    <property type="evidence" value="ECO:0000318"/>
    <property type="project" value="GO_Central"/>
</dbReference>
<dbReference type="GO" id="GO:0004055">
    <property type="term" value="F:argininosuccinate synthase activity"/>
    <property type="evidence" value="ECO:0000318"/>
    <property type="project" value="GO_Central"/>
</dbReference>
<dbReference type="GO" id="GO:0005524">
    <property type="term" value="F:ATP binding"/>
    <property type="evidence" value="ECO:0007669"/>
    <property type="project" value="UniProtKB-UniRule"/>
</dbReference>
<dbReference type="GO" id="GO:0000053">
    <property type="term" value="P:argininosuccinate metabolic process"/>
    <property type="evidence" value="ECO:0000318"/>
    <property type="project" value="GO_Central"/>
</dbReference>
<dbReference type="GO" id="GO:0006526">
    <property type="term" value="P:L-arginine biosynthetic process"/>
    <property type="evidence" value="ECO:0000318"/>
    <property type="project" value="GO_Central"/>
</dbReference>
<dbReference type="GO" id="GO:0000050">
    <property type="term" value="P:urea cycle"/>
    <property type="evidence" value="ECO:0000318"/>
    <property type="project" value="GO_Central"/>
</dbReference>
<dbReference type="CDD" id="cd01999">
    <property type="entry name" value="ASS"/>
    <property type="match status" value="1"/>
</dbReference>
<dbReference type="FunFam" id="3.40.50.620:FF:000019">
    <property type="entry name" value="Argininosuccinate synthase"/>
    <property type="match status" value="1"/>
</dbReference>
<dbReference type="FunFam" id="3.90.1260.10:FF:000007">
    <property type="entry name" value="Argininosuccinate synthase"/>
    <property type="match status" value="1"/>
</dbReference>
<dbReference type="Gene3D" id="3.90.1260.10">
    <property type="entry name" value="Argininosuccinate synthetase, chain A, domain 2"/>
    <property type="match status" value="1"/>
</dbReference>
<dbReference type="Gene3D" id="3.40.50.620">
    <property type="entry name" value="HUPs"/>
    <property type="match status" value="1"/>
</dbReference>
<dbReference type="Gene3D" id="1.20.5.470">
    <property type="entry name" value="Single helix bin"/>
    <property type="match status" value="1"/>
</dbReference>
<dbReference type="HAMAP" id="MF_00005">
    <property type="entry name" value="Arg_succ_synth_type1"/>
    <property type="match status" value="1"/>
</dbReference>
<dbReference type="InterPro" id="IPR048268">
    <property type="entry name" value="Arginosuc_syn_C"/>
</dbReference>
<dbReference type="InterPro" id="IPR048267">
    <property type="entry name" value="Arginosuc_syn_N"/>
</dbReference>
<dbReference type="InterPro" id="IPR001518">
    <property type="entry name" value="Arginosuc_synth"/>
</dbReference>
<dbReference type="InterPro" id="IPR018223">
    <property type="entry name" value="Arginosuc_synth_CS"/>
</dbReference>
<dbReference type="InterPro" id="IPR023434">
    <property type="entry name" value="Arginosuc_synth_type_1_subfam"/>
</dbReference>
<dbReference type="InterPro" id="IPR024074">
    <property type="entry name" value="AS_cat/multimer_dom_body"/>
</dbReference>
<dbReference type="InterPro" id="IPR014729">
    <property type="entry name" value="Rossmann-like_a/b/a_fold"/>
</dbReference>
<dbReference type="NCBIfam" id="TIGR00032">
    <property type="entry name" value="argG"/>
    <property type="match status" value="1"/>
</dbReference>
<dbReference type="NCBIfam" id="NF001770">
    <property type="entry name" value="PRK00509.1"/>
    <property type="match status" value="1"/>
</dbReference>
<dbReference type="PANTHER" id="PTHR11587">
    <property type="entry name" value="ARGININOSUCCINATE SYNTHASE"/>
    <property type="match status" value="1"/>
</dbReference>
<dbReference type="PANTHER" id="PTHR11587:SF2">
    <property type="entry name" value="ARGININOSUCCINATE SYNTHASE"/>
    <property type="match status" value="1"/>
</dbReference>
<dbReference type="Pfam" id="PF20979">
    <property type="entry name" value="Arginosuc_syn_C"/>
    <property type="match status" value="1"/>
</dbReference>
<dbReference type="Pfam" id="PF00764">
    <property type="entry name" value="Arginosuc_synth"/>
    <property type="match status" value="1"/>
</dbReference>
<dbReference type="SUPFAM" id="SSF52402">
    <property type="entry name" value="Adenine nucleotide alpha hydrolases-like"/>
    <property type="match status" value="1"/>
</dbReference>
<dbReference type="SUPFAM" id="SSF69864">
    <property type="entry name" value="Argininosuccinate synthetase, C-terminal domain"/>
    <property type="match status" value="1"/>
</dbReference>
<dbReference type="PROSITE" id="PS00564">
    <property type="entry name" value="ARGININOSUCCIN_SYN_1"/>
    <property type="match status" value="1"/>
</dbReference>
<dbReference type="PROSITE" id="PS00565">
    <property type="entry name" value="ARGININOSUCCIN_SYN_2"/>
    <property type="match status" value="1"/>
</dbReference>
<keyword id="KW-0002">3D-structure</keyword>
<keyword id="KW-0028">Amino-acid biosynthesis</keyword>
<keyword id="KW-0055">Arginine biosynthesis</keyword>
<keyword id="KW-0067">ATP-binding</keyword>
<keyword id="KW-0963">Cytoplasm</keyword>
<keyword id="KW-0436">Ligase</keyword>
<keyword id="KW-0547">Nucleotide-binding</keyword>
<keyword id="KW-1185">Reference proteome</keyword>
<name>ASSY_THEMA</name>
<comment type="catalytic activity">
    <reaction evidence="1">
        <text>L-citrulline + L-aspartate + ATP = 2-(N(omega)-L-arginino)succinate + AMP + diphosphate + H(+)</text>
        <dbReference type="Rhea" id="RHEA:10932"/>
        <dbReference type="ChEBI" id="CHEBI:15378"/>
        <dbReference type="ChEBI" id="CHEBI:29991"/>
        <dbReference type="ChEBI" id="CHEBI:30616"/>
        <dbReference type="ChEBI" id="CHEBI:33019"/>
        <dbReference type="ChEBI" id="CHEBI:57472"/>
        <dbReference type="ChEBI" id="CHEBI:57743"/>
        <dbReference type="ChEBI" id="CHEBI:456215"/>
        <dbReference type="EC" id="6.3.4.5"/>
    </reaction>
</comment>
<comment type="pathway">
    <text evidence="1">Amino-acid biosynthesis; L-arginine biosynthesis; L-arginine from L-ornithine and carbamoyl phosphate: step 2/3.</text>
</comment>
<comment type="subunit">
    <text evidence="1 2">Homotetramer.</text>
</comment>
<comment type="subcellular location">
    <subcellularLocation>
        <location evidence="3">Cytoplasm</location>
    </subcellularLocation>
</comment>
<comment type="similarity">
    <text evidence="1">Belongs to the argininosuccinate synthase family. Type 1 subfamily.</text>
</comment>
<reference key="1">
    <citation type="journal article" date="1999" name="Nature">
        <title>Evidence for lateral gene transfer between Archaea and Bacteria from genome sequence of Thermotoga maritima.</title>
        <authorList>
            <person name="Nelson K.E."/>
            <person name="Clayton R.A."/>
            <person name="Gill S.R."/>
            <person name="Gwinn M.L."/>
            <person name="Dodson R.J."/>
            <person name="Haft D.H."/>
            <person name="Hickey E.K."/>
            <person name="Peterson J.D."/>
            <person name="Nelson W.C."/>
            <person name="Ketchum K.A."/>
            <person name="McDonald L.A."/>
            <person name="Utterback T.R."/>
            <person name="Malek J.A."/>
            <person name="Linher K.D."/>
            <person name="Garrett M.M."/>
            <person name="Stewart A.M."/>
            <person name="Cotton M.D."/>
            <person name="Pratt M.S."/>
            <person name="Phillips C.A."/>
            <person name="Richardson D.L."/>
            <person name="Heidelberg J.F."/>
            <person name="Sutton G.G."/>
            <person name="Fleischmann R.D."/>
            <person name="Eisen J.A."/>
            <person name="White O."/>
            <person name="Salzberg S.L."/>
            <person name="Smith H.O."/>
            <person name="Venter J.C."/>
            <person name="Fraser C.M."/>
        </authorList>
    </citation>
    <scope>NUCLEOTIDE SEQUENCE [LARGE SCALE GENOMIC DNA]</scope>
    <source>
        <strain>ATCC 43589 / DSM 3109 / JCM 10099 / NBRC 100826 / MSB8</strain>
    </source>
</reference>
<reference key="2">
    <citation type="submission" date="2006-03" db="PDB data bank">
        <title>Crystal structure of argininosuccinate synthase (TM1780) from Thermotoga maritima at 1.65 A resolution.</title>
        <authorList>
            <consortium name="Joint center for structural genomics (JCSG)"/>
        </authorList>
    </citation>
    <scope>X-RAY CRYSTALLOGRAPHY (1.65 ANGSTROMS)</scope>
    <scope>SUBUNIT</scope>
</reference>
<organism>
    <name type="scientific">Thermotoga maritima (strain ATCC 43589 / DSM 3109 / JCM 10099 / NBRC 100826 / MSB8)</name>
    <dbReference type="NCBI Taxonomy" id="243274"/>
    <lineage>
        <taxon>Bacteria</taxon>
        <taxon>Thermotogati</taxon>
        <taxon>Thermotogota</taxon>
        <taxon>Thermotogae</taxon>
        <taxon>Thermotogales</taxon>
        <taxon>Thermotogaceae</taxon>
        <taxon>Thermotoga</taxon>
    </lineage>
</organism>
<feature type="chain" id="PRO_0000148656" description="Argininosuccinate synthase">
    <location>
        <begin position="1"/>
        <end position="409"/>
    </location>
</feature>
<feature type="binding site" evidence="1">
    <location>
        <begin position="8"/>
        <end position="16"/>
    </location>
    <ligand>
        <name>ATP</name>
        <dbReference type="ChEBI" id="CHEBI:30616"/>
    </ligand>
</feature>
<feature type="binding site" evidence="1">
    <location>
        <position position="34"/>
    </location>
    <ligand>
        <name>ATP</name>
        <dbReference type="ChEBI" id="CHEBI:30616"/>
    </ligand>
</feature>
<feature type="binding site" evidence="1">
    <location>
        <position position="85"/>
    </location>
    <ligand>
        <name>L-citrulline</name>
        <dbReference type="ChEBI" id="CHEBI:57743"/>
    </ligand>
</feature>
<feature type="binding site" evidence="1">
    <location>
        <position position="115"/>
    </location>
    <ligand>
        <name>ATP</name>
        <dbReference type="ChEBI" id="CHEBI:30616"/>
    </ligand>
</feature>
<feature type="binding site" evidence="1">
    <location>
        <position position="117"/>
    </location>
    <ligand>
        <name>L-aspartate</name>
        <dbReference type="ChEBI" id="CHEBI:29991"/>
    </ligand>
</feature>
<feature type="binding site" evidence="1">
    <location>
        <position position="121"/>
    </location>
    <ligand>
        <name>L-aspartate</name>
        <dbReference type="ChEBI" id="CHEBI:29991"/>
    </ligand>
</feature>
<feature type="binding site" evidence="1">
    <location>
        <position position="121"/>
    </location>
    <ligand>
        <name>L-citrulline</name>
        <dbReference type="ChEBI" id="CHEBI:57743"/>
    </ligand>
</feature>
<feature type="binding site" evidence="1">
    <location>
        <position position="122"/>
    </location>
    <ligand>
        <name>L-aspartate</name>
        <dbReference type="ChEBI" id="CHEBI:29991"/>
    </ligand>
</feature>
<feature type="binding site" evidence="1">
    <location>
        <position position="125"/>
    </location>
    <ligand>
        <name>L-citrulline</name>
        <dbReference type="ChEBI" id="CHEBI:57743"/>
    </ligand>
</feature>
<feature type="binding site" evidence="1">
    <location>
        <position position="178"/>
    </location>
    <ligand>
        <name>L-citrulline</name>
        <dbReference type="ChEBI" id="CHEBI:57743"/>
    </ligand>
</feature>
<feature type="binding site" evidence="1">
    <location>
        <position position="187"/>
    </location>
    <ligand>
        <name>L-citrulline</name>
        <dbReference type="ChEBI" id="CHEBI:57743"/>
    </ligand>
</feature>
<feature type="binding site" evidence="1">
    <location>
        <position position="268"/>
    </location>
    <ligand>
        <name>L-citrulline</name>
        <dbReference type="ChEBI" id="CHEBI:57743"/>
    </ligand>
</feature>
<feature type="binding site" evidence="1">
    <location>
        <position position="280"/>
    </location>
    <ligand>
        <name>L-citrulline</name>
        <dbReference type="ChEBI" id="CHEBI:57743"/>
    </ligand>
</feature>
<feature type="strand" evidence="4">
    <location>
        <begin position="4"/>
        <end position="8"/>
    </location>
</feature>
<feature type="helix" evidence="4">
    <location>
        <begin position="13"/>
        <end position="24"/>
    </location>
</feature>
<feature type="strand" evidence="4">
    <location>
        <begin position="28"/>
        <end position="37"/>
    </location>
</feature>
<feature type="helix" evidence="4">
    <location>
        <begin position="42"/>
        <end position="52"/>
    </location>
</feature>
<feature type="strand" evidence="4">
    <location>
        <begin position="55"/>
        <end position="61"/>
    </location>
</feature>
<feature type="helix" evidence="4">
    <location>
        <begin position="63"/>
        <end position="69"/>
    </location>
</feature>
<feature type="helix" evidence="4">
    <location>
        <begin position="71"/>
        <end position="75"/>
    </location>
</feature>
<feature type="turn" evidence="4">
    <location>
        <begin position="76"/>
        <end position="78"/>
    </location>
</feature>
<feature type="turn" evidence="4">
    <location>
        <begin position="82"/>
        <end position="84"/>
    </location>
</feature>
<feature type="helix" evidence="4">
    <location>
        <begin position="88"/>
        <end position="107"/>
    </location>
</feature>
<feature type="strand" evidence="4">
    <location>
        <begin position="110"/>
        <end position="113"/>
    </location>
</feature>
<feature type="helix" evidence="4">
    <location>
        <begin position="122"/>
        <end position="133"/>
    </location>
</feature>
<feature type="strand" evidence="4">
    <location>
        <begin position="137"/>
        <end position="140"/>
    </location>
</feature>
<feature type="helix" evidence="4">
    <location>
        <begin position="142"/>
        <end position="144"/>
    </location>
</feature>
<feature type="helix" evidence="4">
    <location>
        <begin position="146"/>
        <end position="151"/>
    </location>
</feature>
<feature type="helix" evidence="4">
    <location>
        <begin position="157"/>
        <end position="165"/>
    </location>
</feature>
<feature type="strand" evidence="4">
    <location>
        <begin position="176"/>
        <end position="181"/>
    </location>
</feature>
<feature type="strand" evidence="4">
    <location>
        <begin position="186"/>
        <end position="190"/>
    </location>
</feature>
<feature type="helix" evidence="4">
    <location>
        <begin position="191"/>
        <end position="194"/>
    </location>
</feature>
<feature type="helix" evidence="4">
    <location>
        <begin position="202"/>
        <end position="204"/>
    </location>
</feature>
<feature type="turn" evidence="4">
    <location>
        <begin position="211"/>
        <end position="213"/>
    </location>
</feature>
<feature type="strand" evidence="4">
    <location>
        <begin position="219"/>
        <end position="226"/>
    </location>
</feature>
<feature type="strand" evidence="4">
    <location>
        <begin position="229"/>
        <end position="235"/>
    </location>
</feature>
<feature type="turn" evidence="4">
    <location>
        <begin position="236"/>
        <end position="238"/>
    </location>
</feature>
<feature type="helix" evidence="4">
    <location>
        <begin position="245"/>
        <end position="258"/>
    </location>
</feature>
<feature type="strand" evidence="4">
    <location>
        <begin position="263"/>
        <end position="269"/>
    </location>
</feature>
<feature type="strand" evidence="4">
    <location>
        <begin position="271"/>
        <end position="281"/>
    </location>
</feature>
<feature type="helix" evidence="4">
    <location>
        <begin position="283"/>
        <end position="299"/>
    </location>
</feature>
<feature type="helix" evidence="4">
    <location>
        <begin position="302"/>
        <end position="321"/>
    </location>
</feature>
<feature type="helix" evidence="4">
    <location>
        <begin position="327"/>
        <end position="340"/>
    </location>
</feature>
<feature type="strand" evidence="4">
    <location>
        <begin position="345"/>
        <end position="352"/>
    </location>
</feature>
<feature type="strand" evidence="4">
    <location>
        <begin position="355"/>
        <end position="362"/>
    </location>
</feature>
<feature type="strand" evidence="4">
    <location>
        <begin position="364"/>
        <end position="366"/>
    </location>
</feature>
<feature type="helix" evidence="4">
    <location>
        <begin position="383"/>
        <end position="404"/>
    </location>
</feature>
<proteinExistence type="evidence at protein level"/>
<evidence type="ECO:0000255" key="1">
    <source>
        <dbReference type="HAMAP-Rule" id="MF_00005"/>
    </source>
</evidence>
<evidence type="ECO:0000269" key="2">
    <source ref="2"/>
</evidence>
<evidence type="ECO:0000305" key="3"/>
<evidence type="ECO:0007829" key="4">
    <source>
        <dbReference type="PDB" id="1VL2"/>
    </source>
</evidence>
<gene>
    <name evidence="1" type="primary">argG</name>
    <name type="ordered locus">TM_1780</name>
</gene>
<sequence>MKEKVVLAYSGGLDTSVILKWLCEKGFDVIAYVANVGQKDDFVAIKEKALKTGASKVYVEDLRREFVTDYIFTALLGNAMYEGRYLLGTAIARPLIAKRQVEIAEKEGAQYVAHGATGKGNDQVRFELTYAALNPNLKVISPWKDPEFLAKFKGRTDLINYAMEKGIPIKVSKKRPYSEDENLMHISHEAGKLEDPAHIPDEDVFTWTVSPKDAPDEETLLEIHFENGIPVKVVNLKDGTEKTDPLELFEYLNEVGAKNGVGRLDMVENRFIGIKSRGVYETPGATILWIAHRDLEGITMDKEVMHLRDMLAPKFAELIYNGFWFSPEMEFLLAAFRKAQENVTGKVTVSIYKGNVMPVARYSPYSLYNPELSSMDVEGGFDATDSKGFINIHALRLKVHQLVKKGYQR</sequence>